<reference key="1">
    <citation type="journal article" date="2011" name="MBio">
        <title>Novel metabolic attributes of the genus Cyanothece, comprising a group of unicellular nitrogen-fixing Cyanobacteria.</title>
        <authorList>
            <person name="Bandyopadhyay A."/>
            <person name="Elvitigala T."/>
            <person name="Welsh E."/>
            <person name="Stockel J."/>
            <person name="Liberton M."/>
            <person name="Min H."/>
            <person name="Sherman L.A."/>
            <person name="Pakrasi H.B."/>
        </authorList>
    </citation>
    <scope>NUCLEOTIDE SEQUENCE [LARGE SCALE GENOMIC DNA]</scope>
    <source>
        <strain>PCC 7424</strain>
    </source>
</reference>
<evidence type="ECO:0000255" key="1">
    <source>
        <dbReference type="HAMAP-Rule" id="MF_00365"/>
    </source>
</evidence>
<name>RECF_GLOC7</name>
<protein>
    <recommendedName>
        <fullName evidence="1">DNA replication and repair protein RecF</fullName>
    </recommendedName>
</protein>
<keyword id="KW-0067">ATP-binding</keyword>
<keyword id="KW-0963">Cytoplasm</keyword>
<keyword id="KW-0227">DNA damage</keyword>
<keyword id="KW-0234">DNA repair</keyword>
<keyword id="KW-0235">DNA replication</keyword>
<keyword id="KW-0238">DNA-binding</keyword>
<keyword id="KW-0547">Nucleotide-binding</keyword>
<keyword id="KW-1185">Reference proteome</keyword>
<keyword id="KW-0742">SOS response</keyword>
<accession>B7KID4</accession>
<gene>
    <name evidence="1" type="primary">recF</name>
    <name type="ordered locus">PCC7424_5273</name>
</gene>
<organism>
    <name type="scientific">Gloeothece citriformis (strain PCC 7424)</name>
    <name type="common">Cyanothece sp. (strain PCC 7424)</name>
    <dbReference type="NCBI Taxonomy" id="65393"/>
    <lineage>
        <taxon>Bacteria</taxon>
        <taxon>Bacillati</taxon>
        <taxon>Cyanobacteriota</taxon>
        <taxon>Cyanophyceae</taxon>
        <taxon>Oscillatoriophycideae</taxon>
        <taxon>Chroococcales</taxon>
        <taxon>Aphanothecaceae</taxon>
        <taxon>Gloeothece</taxon>
        <taxon>Gloeothece citriformis</taxon>
    </lineage>
</organism>
<dbReference type="EMBL" id="CP001291">
    <property type="protein sequence ID" value="ACK73621.1"/>
    <property type="molecule type" value="Genomic_DNA"/>
</dbReference>
<dbReference type="RefSeq" id="WP_015957199.1">
    <property type="nucleotide sequence ID" value="NC_011729.1"/>
</dbReference>
<dbReference type="SMR" id="B7KID4"/>
<dbReference type="STRING" id="65393.PCC7424_5273"/>
<dbReference type="KEGG" id="cyc:PCC7424_5273"/>
<dbReference type="eggNOG" id="COG1195">
    <property type="taxonomic scope" value="Bacteria"/>
</dbReference>
<dbReference type="HOGENOM" id="CLU_040267_0_1_3"/>
<dbReference type="OrthoDB" id="9803889at2"/>
<dbReference type="Proteomes" id="UP000002384">
    <property type="component" value="Chromosome"/>
</dbReference>
<dbReference type="GO" id="GO:0005737">
    <property type="term" value="C:cytoplasm"/>
    <property type="evidence" value="ECO:0007669"/>
    <property type="project" value="UniProtKB-SubCell"/>
</dbReference>
<dbReference type="GO" id="GO:0005524">
    <property type="term" value="F:ATP binding"/>
    <property type="evidence" value="ECO:0007669"/>
    <property type="project" value="UniProtKB-UniRule"/>
</dbReference>
<dbReference type="GO" id="GO:0003697">
    <property type="term" value="F:single-stranded DNA binding"/>
    <property type="evidence" value="ECO:0007669"/>
    <property type="project" value="UniProtKB-UniRule"/>
</dbReference>
<dbReference type="GO" id="GO:0006260">
    <property type="term" value="P:DNA replication"/>
    <property type="evidence" value="ECO:0007669"/>
    <property type="project" value="UniProtKB-UniRule"/>
</dbReference>
<dbReference type="GO" id="GO:0000731">
    <property type="term" value="P:DNA synthesis involved in DNA repair"/>
    <property type="evidence" value="ECO:0007669"/>
    <property type="project" value="TreeGrafter"/>
</dbReference>
<dbReference type="GO" id="GO:0006302">
    <property type="term" value="P:double-strand break repair"/>
    <property type="evidence" value="ECO:0007669"/>
    <property type="project" value="TreeGrafter"/>
</dbReference>
<dbReference type="GO" id="GO:0009432">
    <property type="term" value="P:SOS response"/>
    <property type="evidence" value="ECO:0007669"/>
    <property type="project" value="UniProtKB-UniRule"/>
</dbReference>
<dbReference type="CDD" id="cd03242">
    <property type="entry name" value="ABC_RecF"/>
    <property type="match status" value="1"/>
</dbReference>
<dbReference type="Gene3D" id="3.40.50.300">
    <property type="entry name" value="P-loop containing nucleotide triphosphate hydrolases"/>
    <property type="match status" value="1"/>
</dbReference>
<dbReference type="Gene3D" id="1.20.1050.90">
    <property type="entry name" value="RecF/RecN/SMC, N-terminal domain"/>
    <property type="match status" value="1"/>
</dbReference>
<dbReference type="HAMAP" id="MF_00365">
    <property type="entry name" value="RecF"/>
    <property type="match status" value="1"/>
</dbReference>
<dbReference type="InterPro" id="IPR001238">
    <property type="entry name" value="DNA-binding_RecF"/>
</dbReference>
<dbReference type="InterPro" id="IPR018078">
    <property type="entry name" value="DNA-binding_RecF_CS"/>
</dbReference>
<dbReference type="InterPro" id="IPR027417">
    <property type="entry name" value="P-loop_NTPase"/>
</dbReference>
<dbReference type="InterPro" id="IPR003395">
    <property type="entry name" value="RecF/RecN/SMC_N"/>
</dbReference>
<dbReference type="InterPro" id="IPR042174">
    <property type="entry name" value="RecF_2"/>
</dbReference>
<dbReference type="NCBIfam" id="TIGR00611">
    <property type="entry name" value="recf"/>
    <property type="match status" value="1"/>
</dbReference>
<dbReference type="PANTHER" id="PTHR32182">
    <property type="entry name" value="DNA REPLICATION AND REPAIR PROTEIN RECF"/>
    <property type="match status" value="1"/>
</dbReference>
<dbReference type="PANTHER" id="PTHR32182:SF0">
    <property type="entry name" value="DNA REPLICATION AND REPAIR PROTEIN RECF"/>
    <property type="match status" value="1"/>
</dbReference>
<dbReference type="Pfam" id="PF02463">
    <property type="entry name" value="SMC_N"/>
    <property type="match status" value="1"/>
</dbReference>
<dbReference type="SUPFAM" id="SSF52540">
    <property type="entry name" value="P-loop containing nucleoside triphosphate hydrolases"/>
    <property type="match status" value="1"/>
</dbReference>
<dbReference type="PROSITE" id="PS00617">
    <property type="entry name" value="RECF_1"/>
    <property type="match status" value="1"/>
</dbReference>
<dbReference type="PROSITE" id="PS00618">
    <property type="entry name" value="RECF_2"/>
    <property type="match status" value="1"/>
</dbReference>
<feature type="chain" id="PRO_1000121105" description="DNA replication and repair protein RecF">
    <location>
        <begin position="1"/>
        <end position="384"/>
    </location>
</feature>
<feature type="binding site" evidence="1">
    <location>
        <begin position="30"/>
        <end position="37"/>
    </location>
    <ligand>
        <name>ATP</name>
        <dbReference type="ChEBI" id="CHEBI:30616"/>
    </ligand>
</feature>
<proteinExistence type="inferred from homology"/>
<sequence length="384" mass="44077">MYLKTVQLRSFRNYREQQVNFESQKTIIVGNNAQGKSNLLEAVELLATLKSHRVSRDRDLVLEGATTGQILATLERAYGLAELGLILRVSGRRTVILNQEPLRRQLDFLGVLNAVQFSSLDLDLVRGSPESRRSWIDTLLVQLEPIYAHILSQYYQVLKQRNALLKKIRQQEEDSQNPSLSSEQLSNDISQLKLWDSQLAETGSRVTRRRARVLERLTPLAQKWHANISGKTEQLEIQYMPNVNWTEDEPMQVQQAFLEKIEKRRIAEQQLGTTVVGPHRDEIEFIINQTPAKYYGSQGQQRTLVLALKLAELHLIEEVVGEPPLLLLDDVLAELDPHRQNQLLDAIEDRFQTLITTTHLNSFETKWLKSSQILSIDGGQIRDF</sequence>
<comment type="function">
    <text evidence="1">The RecF protein is involved in DNA metabolism; it is required for DNA replication and normal SOS inducibility. RecF binds preferentially to single-stranded, linear DNA. It also seems to bind ATP.</text>
</comment>
<comment type="subcellular location">
    <subcellularLocation>
        <location evidence="1">Cytoplasm</location>
    </subcellularLocation>
</comment>
<comment type="similarity">
    <text evidence="1">Belongs to the RecF family.</text>
</comment>